<evidence type="ECO:0000255" key="1">
    <source>
        <dbReference type="HAMAP-Rule" id="MF_00178"/>
    </source>
</evidence>
<feature type="chain" id="PRO_1000098199" description="6,7-dimethyl-8-ribityllumazine synthase">
    <location>
        <begin position="1"/>
        <end position="153"/>
    </location>
</feature>
<feature type="active site" description="Proton donor" evidence="1">
    <location>
        <position position="88"/>
    </location>
</feature>
<feature type="binding site" evidence="1">
    <location>
        <position position="22"/>
    </location>
    <ligand>
        <name>5-amino-6-(D-ribitylamino)uracil</name>
        <dbReference type="ChEBI" id="CHEBI:15934"/>
    </ligand>
</feature>
<feature type="binding site" evidence="1">
    <location>
        <begin position="56"/>
        <end position="58"/>
    </location>
    <ligand>
        <name>5-amino-6-(D-ribitylamino)uracil</name>
        <dbReference type="ChEBI" id="CHEBI:15934"/>
    </ligand>
</feature>
<feature type="binding site" evidence="1">
    <location>
        <begin position="80"/>
        <end position="82"/>
    </location>
    <ligand>
        <name>5-amino-6-(D-ribitylamino)uracil</name>
        <dbReference type="ChEBI" id="CHEBI:15934"/>
    </ligand>
</feature>
<feature type="binding site" evidence="1">
    <location>
        <begin position="85"/>
        <end position="86"/>
    </location>
    <ligand>
        <name>(2S)-2-hydroxy-3-oxobutyl phosphate</name>
        <dbReference type="ChEBI" id="CHEBI:58830"/>
    </ligand>
</feature>
<feature type="binding site" evidence="1">
    <location>
        <position position="113"/>
    </location>
    <ligand>
        <name>5-amino-6-(D-ribitylamino)uracil</name>
        <dbReference type="ChEBI" id="CHEBI:15934"/>
    </ligand>
</feature>
<feature type="binding site" evidence="1">
    <location>
        <position position="127"/>
    </location>
    <ligand>
        <name>(2S)-2-hydroxy-3-oxobutyl phosphate</name>
        <dbReference type="ChEBI" id="CHEBI:58830"/>
    </ligand>
</feature>
<sequence length="153" mass="16111">MNVIEGNLIGTGLRVAIVIARWNDFIGGNLLEGAVNTLKRHGVNDDDISVAWCPGSYEIPLVVKKIAERGQHDAIITLGAVIRGATSHYEVVVNAVSSGVTKVMHDTGIPVLLGVLTTDTIEQAIERAGTKAGNKGSECAVAAIEMANLLKQL</sequence>
<name>RISB_HERA2</name>
<dbReference type="EC" id="2.5.1.78" evidence="1"/>
<dbReference type="EMBL" id="CP000875">
    <property type="protein sequence ID" value="ABX04229.1"/>
    <property type="molecule type" value="Genomic_DNA"/>
</dbReference>
<dbReference type="SMR" id="A9B4R4"/>
<dbReference type="FunCoup" id="A9B4R4">
    <property type="interactions" value="494"/>
</dbReference>
<dbReference type="STRING" id="316274.Haur_1586"/>
<dbReference type="KEGG" id="hau:Haur_1586"/>
<dbReference type="eggNOG" id="COG0054">
    <property type="taxonomic scope" value="Bacteria"/>
</dbReference>
<dbReference type="HOGENOM" id="CLU_089358_1_1_0"/>
<dbReference type="InParanoid" id="A9B4R4"/>
<dbReference type="UniPathway" id="UPA00275">
    <property type="reaction ID" value="UER00404"/>
</dbReference>
<dbReference type="Proteomes" id="UP000000787">
    <property type="component" value="Chromosome"/>
</dbReference>
<dbReference type="GO" id="GO:0005829">
    <property type="term" value="C:cytosol"/>
    <property type="evidence" value="ECO:0007669"/>
    <property type="project" value="TreeGrafter"/>
</dbReference>
<dbReference type="GO" id="GO:0009349">
    <property type="term" value="C:riboflavin synthase complex"/>
    <property type="evidence" value="ECO:0007669"/>
    <property type="project" value="InterPro"/>
</dbReference>
<dbReference type="GO" id="GO:0000906">
    <property type="term" value="F:6,7-dimethyl-8-ribityllumazine synthase activity"/>
    <property type="evidence" value="ECO:0007669"/>
    <property type="project" value="UniProtKB-UniRule"/>
</dbReference>
<dbReference type="GO" id="GO:0009231">
    <property type="term" value="P:riboflavin biosynthetic process"/>
    <property type="evidence" value="ECO:0007669"/>
    <property type="project" value="UniProtKB-UniRule"/>
</dbReference>
<dbReference type="CDD" id="cd09209">
    <property type="entry name" value="Lumazine_synthase-I"/>
    <property type="match status" value="1"/>
</dbReference>
<dbReference type="FunFam" id="3.40.50.960:FF:000001">
    <property type="entry name" value="6,7-dimethyl-8-ribityllumazine synthase"/>
    <property type="match status" value="1"/>
</dbReference>
<dbReference type="Gene3D" id="3.40.50.960">
    <property type="entry name" value="Lumazine/riboflavin synthase"/>
    <property type="match status" value="1"/>
</dbReference>
<dbReference type="HAMAP" id="MF_00178">
    <property type="entry name" value="Lumazine_synth"/>
    <property type="match status" value="1"/>
</dbReference>
<dbReference type="InterPro" id="IPR034964">
    <property type="entry name" value="LS"/>
</dbReference>
<dbReference type="InterPro" id="IPR002180">
    <property type="entry name" value="LS/RS"/>
</dbReference>
<dbReference type="InterPro" id="IPR036467">
    <property type="entry name" value="LS/RS_sf"/>
</dbReference>
<dbReference type="NCBIfam" id="TIGR00114">
    <property type="entry name" value="lumazine-synth"/>
    <property type="match status" value="1"/>
</dbReference>
<dbReference type="NCBIfam" id="NF000812">
    <property type="entry name" value="PRK00061.1-4"/>
    <property type="match status" value="1"/>
</dbReference>
<dbReference type="PANTHER" id="PTHR21058:SF0">
    <property type="entry name" value="6,7-DIMETHYL-8-RIBITYLLUMAZINE SYNTHASE"/>
    <property type="match status" value="1"/>
</dbReference>
<dbReference type="PANTHER" id="PTHR21058">
    <property type="entry name" value="6,7-DIMETHYL-8-RIBITYLLUMAZINE SYNTHASE DMRL SYNTHASE LUMAZINE SYNTHASE"/>
    <property type="match status" value="1"/>
</dbReference>
<dbReference type="Pfam" id="PF00885">
    <property type="entry name" value="DMRL_synthase"/>
    <property type="match status" value="1"/>
</dbReference>
<dbReference type="SUPFAM" id="SSF52121">
    <property type="entry name" value="Lumazine synthase"/>
    <property type="match status" value="1"/>
</dbReference>
<comment type="function">
    <text evidence="1">Catalyzes the formation of 6,7-dimethyl-8-ribityllumazine by condensation of 5-amino-6-(D-ribitylamino)uracil with 3,4-dihydroxy-2-butanone 4-phosphate. This is the penultimate step in the biosynthesis of riboflavin.</text>
</comment>
<comment type="catalytic activity">
    <reaction evidence="1">
        <text>(2S)-2-hydroxy-3-oxobutyl phosphate + 5-amino-6-(D-ribitylamino)uracil = 6,7-dimethyl-8-(1-D-ribityl)lumazine + phosphate + 2 H2O + H(+)</text>
        <dbReference type="Rhea" id="RHEA:26152"/>
        <dbReference type="ChEBI" id="CHEBI:15377"/>
        <dbReference type="ChEBI" id="CHEBI:15378"/>
        <dbReference type="ChEBI" id="CHEBI:15934"/>
        <dbReference type="ChEBI" id="CHEBI:43474"/>
        <dbReference type="ChEBI" id="CHEBI:58201"/>
        <dbReference type="ChEBI" id="CHEBI:58830"/>
        <dbReference type="EC" id="2.5.1.78"/>
    </reaction>
</comment>
<comment type="pathway">
    <text evidence="1">Cofactor biosynthesis; riboflavin biosynthesis; riboflavin from 2-hydroxy-3-oxobutyl phosphate and 5-amino-6-(D-ribitylamino)uracil: step 1/2.</text>
</comment>
<comment type="similarity">
    <text evidence="1">Belongs to the DMRL synthase family.</text>
</comment>
<organism>
    <name type="scientific">Herpetosiphon aurantiacus (strain ATCC 23779 / DSM 785 / 114-95)</name>
    <dbReference type="NCBI Taxonomy" id="316274"/>
    <lineage>
        <taxon>Bacteria</taxon>
        <taxon>Bacillati</taxon>
        <taxon>Chloroflexota</taxon>
        <taxon>Chloroflexia</taxon>
        <taxon>Herpetosiphonales</taxon>
        <taxon>Herpetosiphonaceae</taxon>
        <taxon>Herpetosiphon</taxon>
    </lineage>
</organism>
<keyword id="KW-0686">Riboflavin biosynthesis</keyword>
<keyword id="KW-0808">Transferase</keyword>
<accession>A9B4R4</accession>
<protein>
    <recommendedName>
        <fullName evidence="1">6,7-dimethyl-8-ribityllumazine synthase</fullName>
        <shortName evidence="1">DMRL synthase</shortName>
        <shortName evidence="1">LS</shortName>
        <shortName evidence="1">Lumazine synthase</shortName>
        <ecNumber evidence="1">2.5.1.78</ecNumber>
    </recommendedName>
</protein>
<proteinExistence type="inferred from homology"/>
<reference key="1">
    <citation type="journal article" date="2011" name="Stand. Genomic Sci.">
        <title>Complete genome sequence of the filamentous gliding predatory bacterium Herpetosiphon aurantiacus type strain (114-95(T)).</title>
        <authorList>
            <person name="Kiss H."/>
            <person name="Nett M."/>
            <person name="Domin N."/>
            <person name="Martin K."/>
            <person name="Maresca J.A."/>
            <person name="Copeland A."/>
            <person name="Lapidus A."/>
            <person name="Lucas S."/>
            <person name="Berry K.W."/>
            <person name="Glavina Del Rio T."/>
            <person name="Dalin E."/>
            <person name="Tice H."/>
            <person name="Pitluck S."/>
            <person name="Richardson P."/>
            <person name="Bruce D."/>
            <person name="Goodwin L."/>
            <person name="Han C."/>
            <person name="Detter J.C."/>
            <person name="Schmutz J."/>
            <person name="Brettin T."/>
            <person name="Land M."/>
            <person name="Hauser L."/>
            <person name="Kyrpides N.C."/>
            <person name="Ivanova N."/>
            <person name="Goeker M."/>
            <person name="Woyke T."/>
            <person name="Klenk H.P."/>
            <person name="Bryant D.A."/>
        </authorList>
    </citation>
    <scope>NUCLEOTIDE SEQUENCE [LARGE SCALE GENOMIC DNA]</scope>
    <source>
        <strain>ATCC 23779 / DSM 785 / 114-95</strain>
    </source>
</reference>
<gene>
    <name evidence="1" type="primary">ribH</name>
    <name type="ordered locus">Haur_1586</name>
</gene>